<organism>
    <name type="scientific">Salmonella typhi</name>
    <dbReference type="NCBI Taxonomy" id="90370"/>
    <lineage>
        <taxon>Bacteria</taxon>
        <taxon>Pseudomonadati</taxon>
        <taxon>Pseudomonadota</taxon>
        <taxon>Gammaproteobacteria</taxon>
        <taxon>Enterobacterales</taxon>
        <taxon>Enterobacteriaceae</taxon>
        <taxon>Salmonella</taxon>
    </lineage>
</organism>
<proteinExistence type="inferred from homology"/>
<evidence type="ECO:0000255" key="1">
    <source>
        <dbReference type="HAMAP-Rule" id="MF_00915"/>
    </source>
</evidence>
<protein>
    <recommendedName>
        <fullName evidence="1">Cell division protein FtsP</fullName>
    </recommendedName>
</protein>
<name>FTSP_SALTI</name>
<feature type="signal peptide" description="Tat-type signal" evidence="1">
    <location>
        <begin position="1"/>
        <end position="27"/>
    </location>
</feature>
<feature type="chain" id="PRO_0000002995" description="Cell division protein FtsP">
    <location>
        <begin position="28"/>
        <end position="470"/>
    </location>
</feature>
<feature type="domain" description="Plastocyanin-like" evidence="1">
    <location>
        <begin position="222"/>
        <end position="287"/>
    </location>
</feature>
<gene>
    <name evidence="1" type="primary">ftsP</name>
    <name type="synonym">sufI</name>
    <name type="ordered locus">STY3349</name>
    <name type="ordered locus">t3093</name>
</gene>
<dbReference type="EMBL" id="AL513382">
    <property type="protein sequence ID" value="CAD03004.1"/>
    <property type="molecule type" value="Genomic_DNA"/>
</dbReference>
<dbReference type="EMBL" id="AE014613">
    <property type="protein sequence ID" value="AAO70637.1"/>
    <property type="molecule type" value="Genomic_DNA"/>
</dbReference>
<dbReference type="RefSeq" id="NP_457565.1">
    <property type="nucleotide sequence ID" value="NC_003198.1"/>
</dbReference>
<dbReference type="RefSeq" id="WP_000010658.1">
    <property type="nucleotide sequence ID" value="NZ_WSUR01000003.1"/>
</dbReference>
<dbReference type="SMR" id="P0A1C6"/>
<dbReference type="STRING" id="220341.gene:17587207"/>
<dbReference type="KEGG" id="stt:t3093"/>
<dbReference type="KEGG" id="sty:STY3349"/>
<dbReference type="PATRIC" id="fig|220341.7.peg.3409"/>
<dbReference type="eggNOG" id="COG2132">
    <property type="taxonomic scope" value="Bacteria"/>
</dbReference>
<dbReference type="HOGENOM" id="CLU_009100_2_4_6"/>
<dbReference type="OMA" id="GMWIIED"/>
<dbReference type="OrthoDB" id="9757546at2"/>
<dbReference type="Proteomes" id="UP000000541">
    <property type="component" value="Chromosome"/>
</dbReference>
<dbReference type="Proteomes" id="UP000002670">
    <property type="component" value="Chromosome"/>
</dbReference>
<dbReference type="GO" id="GO:0032153">
    <property type="term" value="C:cell division site"/>
    <property type="evidence" value="ECO:0007669"/>
    <property type="project" value="UniProtKB-UniRule"/>
</dbReference>
<dbReference type="GO" id="GO:0030288">
    <property type="term" value="C:outer membrane-bounded periplasmic space"/>
    <property type="evidence" value="ECO:0007669"/>
    <property type="project" value="UniProtKB-UniRule"/>
</dbReference>
<dbReference type="GO" id="GO:0005507">
    <property type="term" value="F:copper ion binding"/>
    <property type="evidence" value="ECO:0007669"/>
    <property type="project" value="InterPro"/>
</dbReference>
<dbReference type="GO" id="GO:0016491">
    <property type="term" value="F:oxidoreductase activity"/>
    <property type="evidence" value="ECO:0007669"/>
    <property type="project" value="InterPro"/>
</dbReference>
<dbReference type="GO" id="GO:0043093">
    <property type="term" value="P:FtsZ-dependent cytokinesis"/>
    <property type="evidence" value="ECO:0007669"/>
    <property type="project" value="UniProtKB-UniRule"/>
</dbReference>
<dbReference type="CDD" id="cd04232">
    <property type="entry name" value="CuRO_1_CueO_FtsP"/>
    <property type="match status" value="1"/>
</dbReference>
<dbReference type="CDD" id="cd13867">
    <property type="entry name" value="CuRO_2_CueO_FtsP"/>
    <property type="match status" value="1"/>
</dbReference>
<dbReference type="CDD" id="cd13890">
    <property type="entry name" value="CuRO_3_CueO_FtsP"/>
    <property type="match status" value="1"/>
</dbReference>
<dbReference type="FunFam" id="2.60.40.420:FF:000004">
    <property type="entry name" value="Cell division protein FtsP"/>
    <property type="match status" value="1"/>
</dbReference>
<dbReference type="FunFam" id="2.60.40.420:FF:000006">
    <property type="entry name" value="Cell division protein FtsP"/>
    <property type="match status" value="1"/>
</dbReference>
<dbReference type="FunFam" id="2.60.40.420:FF:000007">
    <property type="entry name" value="Cell division protein FtsP"/>
    <property type="match status" value="1"/>
</dbReference>
<dbReference type="Gene3D" id="2.60.40.420">
    <property type="entry name" value="Cupredoxins - blue copper proteins"/>
    <property type="match status" value="3"/>
</dbReference>
<dbReference type="HAMAP" id="MF_00915">
    <property type="entry name" value="FtsP"/>
    <property type="match status" value="1"/>
</dbReference>
<dbReference type="InterPro" id="IPR011707">
    <property type="entry name" value="Cu-oxidase-like_N"/>
</dbReference>
<dbReference type="InterPro" id="IPR011706">
    <property type="entry name" value="Cu-oxidase_C"/>
</dbReference>
<dbReference type="InterPro" id="IPR045087">
    <property type="entry name" value="Cu-oxidase_fam"/>
</dbReference>
<dbReference type="InterPro" id="IPR008972">
    <property type="entry name" value="Cupredoxin"/>
</dbReference>
<dbReference type="InterPro" id="IPR026589">
    <property type="entry name" value="FtsP"/>
</dbReference>
<dbReference type="InterPro" id="IPR006311">
    <property type="entry name" value="TAT_signal"/>
</dbReference>
<dbReference type="InterPro" id="IPR019546">
    <property type="entry name" value="TAT_signal_bac_arc"/>
</dbReference>
<dbReference type="NCBIfam" id="NF008135">
    <property type="entry name" value="PRK10883.1"/>
    <property type="match status" value="1"/>
</dbReference>
<dbReference type="NCBIfam" id="TIGR01409">
    <property type="entry name" value="TAT_signal_seq"/>
    <property type="match status" value="1"/>
</dbReference>
<dbReference type="PANTHER" id="PTHR48267:SF1">
    <property type="entry name" value="BILIRUBIN OXIDASE"/>
    <property type="match status" value="1"/>
</dbReference>
<dbReference type="PANTHER" id="PTHR48267">
    <property type="entry name" value="CUPREDOXIN SUPERFAMILY PROTEIN"/>
    <property type="match status" value="1"/>
</dbReference>
<dbReference type="Pfam" id="PF07731">
    <property type="entry name" value="Cu-oxidase_2"/>
    <property type="match status" value="1"/>
</dbReference>
<dbReference type="Pfam" id="PF07732">
    <property type="entry name" value="Cu-oxidase_3"/>
    <property type="match status" value="1"/>
</dbReference>
<dbReference type="SUPFAM" id="SSF49503">
    <property type="entry name" value="Cupredoxins"/>
    <property type="match status" value="3"/>
</dbReference>
<dbReference type="PROSITE" id="PS51318">
    <property type="entry name" value="TAT"/>
    <property type="match status" value="1"/>
</dbReference>
<sequence length="470" mass="51858">MSFSRRQFLQASGIALCAGAIPLRANAAGQQQPLPVPPLLESRRGQPLFMTLQRAHWSFTQGTRAPVWGVNGRYLGPTIRVWKGDDVKLIYSNRLAENVSMTVAGLLVPGPLMGGPARMMSPNADWAPVLPIRQSAATLWYHANTPNRTAQQVYNGLAGMWLVEDDISKTLPIPNHYGVDDFPVIIQDKRLDNFGTPEYSEPGSGGFVGDTLLVNGAQSPYVEVSRGWVRLRLLNASNSRRYQLQMSDGRALHVISGDQGFLPAPVSVKQLSLAPGERREILVDMTNGDEVSITCGEAASIVDRIRGFFEPSSILVSTLVLTLRPTGLLPLVTDNLPMRLLPTEIMSGAPVRSRDISLGDDPGINGQLWDVNRIDITAQQGTWERWTVRADMPQSFHIEGVSFLIRNVNGAMPFPEDRGWKDTVWVDGQVELLVYYGQPSWPHFPFYFNSQTLEMADRGSIGQMLVNPAS</sequence>
<reference key="1">
    <citation type="journal article" date="2001" name="Nature">
        <title>Complete genome sequence of a multiple drug resistant Salmonella enterica serovar Typhi CT18.</title>
        <authorList>
            <person name="Parkhill J."/>
            <person name="Dougan G."/>
            <person name="James K.D."/>
            <person name="Thomson N.R."/>
            <person name="Pickard D."/>
            <person name="Wain J."/>
            <person name="Churcher C.M."/>
            <person name="Mungall K.L."/>
            <person name="Bentley S.D."/>
            <person name="Holden M.T.G."/>
            <person name="Sebaihia M."/>
            <person name="Baker S."/>
            <person name="Basham D."/>
            <person name="Brooks K."/>
            <person name="Chillingworth T."/>
            <person name="Connerton P."/>
            <person name="Cronin A."/>
            <person name="Davis P."/>
            <person name="Davies R.M."/>
            <person name="Dowd L."/>
            <person name="White N."/>
            <person name="Farrar J."/>
            <person name="Feltwell T."/>
            <person name="Hamlin N."/>
            <person name="Haque A."/>
            <person name="Hien T.T."/>
            <person name="Holroyd S."/>
            <person name="Jagels K."/>
            <person name="Krogh A."/>
            <person name="Larsen T.S."/>
            <person name="Leather S."/>
            <person name="Moule S."/>
            <person name="O'Gaora P."/>
            <person name="Parry C."/>
            <person name="Quail M.A."/>
            <person name="Rutherford K.M."/>
            <person name="Simmonds M."/>
            <person name="Skelton J."/>
            <person name="Stevens K."/>
            <person name="Whitehead S."/>
            <person name="Barrell B.G."/>
        </authorList>
    </citation>
    <scope>NUCLEOTIDE SEQUENCE [LARGE SCALE GENOMIC DNA]</scope>
    <source>
        <strain>CT18</strain>
    </source>
</reference>
<reference key="2">
    <citation type="journal article" date="2003" name="J. Bacteriol.">
        <title>Comparative genomics of Salmonella enterica serovar Typhi strains Ty2 and CT18.</title>
        <authorList>
            <person name="Deng W."/>
            <person name="Liou S.-R."/>
            <person name="Plunkett G. III"/>
            <person name="Mayhew G.F."/>
            <person name="Rose D.J."/>
            <person name="Burland V."/>
            <person name="Kodoyianni V."/>
            <person name="Schwartz D.C."/>
            <person name="Blattner F.R."/>
        </authorList>
    </citation>
    <scope>NUCLEOTIDE SEQUENCE [LARGE SCALE GENOMIC DNA]</scope>
    <source>
        <strain>ATCC 700931 / Ty2</strain>
    </source>
</reference>
<keyword id="KW-0131">Cell cycle</keyword>
<keyword id="KW-0132">Cell division</keyword>
<keyword id="KW-0574">Periplasm</keyword>
<keyword id="KW-0732">Signal</keyword>
<comment type="function">
    <text evidence="1">Cell division protein that is required for growth during stress conditions. May be involved in protecting or stabilizing the divisomal assembly under conditions of stress.</text>
</comment>
<comment type="subcellular location">
    <subcellularLocation>
        <location evidence="1">Periplasm</location>
    </subcellularLocation>
    <text evidence="1">Localizes to the division septum.</text>
</comment>
<comment type="PTM">
    <text>Predicted to be exported by the Tat system. The position of the signal peptide cleavage has not been experimentally proven.</text>
</comment>
<comment type="similarity">
    <text evidence="1">Belongs to the FtsP family.</text>
</comment>
<accession>P0A1C6</accession>
<accession>P40799</accession>